<proteinExistence type="inferred from homology"/>
<protein>
    <recommendedName>
        <fullName evidence="1">Leucine--tRNA ligase</fullName>
        <ecNumber evidence="1">6.1.1.4</ecNumber>
    </recommendedName>
    <alternativeName>
        <fullName evidence="1">Leucyl-tRNA synthetase</fullName>
        <shortName evidence="1">LeuRS</shortName>
    </alternativeName>
</protein>
<name>SYL_HELPJ</name>
<accession>Q9ZJ63</accession>
<organism>
    <name type="scientific">Helicobacter pylori (strain J99 / ATCC 700824)</name>
    <name type="common">Campylobacter pylori J99</name>
    <dbReference type="NCBI Taxonomy" id="85963"/>
    <lineage>
        <taxon>Bacteria</taxon>
        <taxon>Pseudomonadati</taxon>
        <taxon>Campylobacterota</taxon>
        <taxon>Epsilonproteobacteria</taxon>
        <taxon>Campylobacterales</taxon>
        <taxon>Helicobacteraceae</taxon>
        <taxon>Helicobacter</taxon>
    </lineage>
</organism>
<reference key="1">
    <citation type="journal article" date="1999" name="Nature">
        <title>Genomic sequence comparison of two unrelated isolates of the human gastric pathogen Helicobacter pylori.</title>
        <authorList>
            <person name="Alm R.A."/>
            <person name="Ling L.-S.L."/>
            <person name="Moir D.T."/>
            <person name="King B.L."/>
            <person name="Brown E.D."/>
            <person name="Doig P.C."/>
            <person name="Smith D.R."/>
            <person name="Noonan B."/>
            <person name="Guild B.C."/>
            <person name="deJonge B.L."/>
            <person name="Carmel G."/>
            <person name="Tummino P.J."/>
            <person name="Caruso A."/>
            <person name="Uria-Nickelsen M."/>
            <person name="Mills D.M."/>
            <person name="Ives C."/>
            <person name="Gibson R."/>
            <person name="Merberg D."/>
            <person name="Mills S.D."/>
            <person name="Jiang Q."/>
            <person name="Taylor D.E."/>
            <person name="Vovis G.F."/>
            <person name="Trust T.J."/>
        </authorList>
    </citation>
    <scope>NUCLEOTIDE SEQUENCE [LARGE SCALE GENOMIC DNA]</scope>
    <source>
        <strain>J99 / ATCC 700824</strain>
    </source>
</reference>
<feature type="chain" id="PRO_0000152027" description="Leucine--tRNA ligase">
    <location>
        <begin position="1"/>
        <end position="806"/>
    </location>
</feature>
<feature type="short sequence motif" description="'HIGH' region">
    <location>
        <begin position="38"/>
        <end position="48"/>
    </location>
</feature>
<feature type="short sequence motif" description="'KMSKS' region">
    <location>
        <begin position="572"/>
        <end position="576"/>
    </location>
</feature>
<feature type="binding site" evidence="1">
    <location>
        <position position="575"/>
    </location>
    <ligand>
        <name>ATP</name>
        <dbReference type="ChEBI" id="CHEBI:30616"/>
    </ligand>
</feature>
<sequence>MDFINIEKKWQEFWWKNKSFEPKDDFNLPKKYILSMLPYPSGEIHMGHVRNYTIGDALARYYRLHHYNVLHPMGFDSFGMPAENAAIKHGIHPKTWTYENIEAMQKEFEALGFSFSKNREFATSDPDYTKFEQQFFIDLWEKGLIYRKKAMLNWCPNDKTVLANEQVIDGRCWRCDTEVIQKELYQYYLKITNYAEELLKDLETLENHWPSQVLTMQKNWIGKSSGLQFGFKIADECLKACNNIQEIEVFTTRADTIYGVTYIAIAPEHPLVEHAIKRVSQEDSKMIKAILNTTQRERALEKKGAFLGIYAIHPLTKQKIPVWVANFALANYGSGALMGVPACDERDFEFANLYHIPIKVITQSPQNLPHTKEEILKNSGEWSDLSSSVAREKIIAYFEKENLGKRVINYRLQDWGVSRQRYWGAPIPMIHCKHCGIVPETQLPVTLPEDIVIDGEGNPLEKHASWKFAQCPKCHKDALRETDTMDTFIQSSWYFLRYTTPKNQRENQAFDQNYLKYFMPVDTYIGGIEHAILHLLYARFFTKALRDLGYLHLDEPFKQLITQGMVLKDGAKMSKSKGNVVSPKEILKKYGADAVRLFILFAAPPAKELEWNDNALEGAHRFIKRLYDKANAITPTTSKPEFKEVGLNEAQKLARKKVYEALKKSHEIFNKAESAYAFNTLIASCMEALNALNAQSDEQILCEGYFVLLQILEPMIPHTAWELSERLFKRENFKPIEVDESALIEDFMTLGLTINGKRRAELKVNINASKEEIIILAKKELEKYLENASVKKEIYVPNKLVNFVTA</sequence>
<dbReference type="EC" id="6.1.1.4" evidence="1"/>
<dbReference type="EMBL" id="AE001439">
    <property type="protein sequence ID" value="AAD07021.1"/>
    <property type="molecule type" value="Genomic_DNA"/>
</dbReference>
<dbReference type="PIR" id="G71805">
    <property type="entry name" value="G71805"/>
</dbReference>
<dbReference type="RefSeq" id="WP_000345685.1">
    <property type="nucleotide sequence ID" value="NC_000921.1"/>
</dbReference>
<dbReference type="SMR" id="Q9ZJ63"/>
<dbReference type="KEGG" id="hpj:jhp_1452"/>
<dbReference type="PATRIC" id="fig|85963.30.peg.1091"/>
<dbReference type="eggNOG" id="COG0495">
    <property type="taxonomic scope" value="Bacteria"/>
</dbReference>
<dbReference type="Proteomes" id="UP000000804">
    <property type="component" value="Chromosome"/>
</dbReference>
<dbReference type="GO" id="GO:0005829">
    <property type="term" value="C:cytosol"/>
    <property type="evidence" value="ECO:0007669"/>
    <property type="project" value="TreeGrafter"/>
</dbReference>
<dbReference type="GO" id="GO:0002161">
    <property type="term" value="F:aminoacyl-tRNA deacylase activity"/>
    <property type="evidence" value="ECO:0007669"/>
    <property type="project" value="InterPro"/>
</dbReference>
<dbReference type="GO" id="GO:0005524">
    <property type="term" value="F:ATP binding"/>
    <property type="evidence" value="ECO:0007669"/>
    <property type="project" value="UniProtKB-UniRule"/>
</dbReference>
<dbReference type="GO" id="GO:0004823">
    <property type="term" value="F:leucine-tRNA ligase activity"/>
    <property type="evidence" value="ECO:0007669"/>
    <property type="project" value="UniProtKB-UniRule"/>
</dbReference>
<dbReference type="GO" id="GO:0006429">
    <property type="term" value="P:leucyl-tRNA aminoacylation"/>
    <property type="evidence" value="ECO:0007669"/>
    <property type="project" value="UniProtKB-UniRule"/>
</dbReference>
<dbReference type="CDD" id="cd00812">
    <property type="entry name" value="LeuRS_core"/>
    <property type="match status" value="1"/>
</dbReference>
<dbReference type="FunFam" id="1.10.730.10:FF:000002">
    <property type="entry name" value="Leucine--tRNA ligase"/>
    <property type="match status" value="1"/>
</dbReference>
<dbReference type="FunFam" id="3.40.50.620:FF:000003">
    <property type="entry name" value="Leucine--tRNA ligase"/>
    <property type="match status" value="1"/>
</dbReference>
<dbReference type="FunFam" id="3.40.50.620:FF:000212">
    <property type="entry name" value="Leucine--tRNA ligase"/>
    <property type="match status" value="1"/>
</dbReference>
<dbReference type="Gene3D" id="3.10.20.590">
    <property type="match status" value="1"/>
</dbReference>
<dbReference type="Gene3D" id="3.40.50.620">
    <property type="entry name" value="HUPs"/>
    <property type="match status" value="2"/>
</dbReference>
<dbReference type="Gene3D" id="1.10.730.10">
    <property type="entry name" value="Isoleucyl-tRNA Synthetase, Domain 1"/>
    <property type="match status" value="2"/>
</dbReference>
<dbReference type="HAMAP" id="MF_00049_B">
    <property type="entry name" value="Leu_tRNA_synth_B"/>
    <property type="match status" value="1"/>
</dbReference>
<dbReference type="InterPro" id="IPR001412">
    <property type="entry name" value="aa-tRNA-synth_I_CS"/>
</dbReference>
<dbReference type="InterPro" id="IPR002300">
    <property type="entry name" value="aa-tRNA-synth_Ia"/>
</dbReference>
<dbReference type="InterPro" id="IPR002302">
    <property type="entry name" value="Leu-tRNA-ligase"/>
</dbReference>
<dbReference type="InterPro" id="IPR025709">
    <property type="entry name" value="Leu_tRNA-synth_edit"/>
</dbReference>
<dbReference type="InterPro" id="IPR015413">
    <property type="entry name" value="Methionyl/Leucyl_tRNA_Synth"/>
</dbReference>
<dbReference type="InterPro" id="IPR014729">
    <property type="entry name" value="Rossmann-like_a/b/a_fold"/>
</dbReference>
<dbReference type="InterPro" id="IPR009080">
    <property type="entry name" value="tRNAsynth_Ia_anticodon-bd"/>
</dbReference>
<dbReference type="InterPro" id="IPR009008">
    <property type="entry name" value="Val/Leu/Ile-tRNA-synth_edit"/>
</dbReference>
<dbReference type="NCBIfam" id="TIGR00396">
    <property type="entry name" value="leuS_bact"/>
    <property type="match status" value="1"/>
</dbReference>
<dbReference type="PANTHER" id="PTHR43740:SF2">
    <property type="entry name" value="LEUCINE--TRNA LIGASE, MITOCHONDRIAL"/>
    <property type="match status" value="1"/>
</dbReference>
<dbReference type="PANTHER" id="PTHR43740">
    <property type="entry name" value="LEUCYL-TRNA SYNTHETASE"/>
    <property type="match status" value="1"/>
</dbReference>
<dbReference type="Pfam" id="PF00133">
    <property type="entry name" value="tRNA-synt_1"/>
    <property type="match status" value="1"/>
</dbReference>
<dbReference type="Pfam" id="PF13603">
    <property type="entry name" value="tRNA-synt_1_2"/>
    <property type="match status" value="1"/>
</dbReference>
<dbReference type="Pfam" id="PF09334">
    <property type="entry name" value="tRNA-synt_1g"/>
    <property type="match status" value="1"/>
</dbReference>
<dbReference type="PRINTS" id="PR00985">
    <property type="entry name" value="TRNASYNTHLEU"/>
</dbReference>
<dbReference type="SUPFAM" id="SSF47323">
    <property type="entry name" value="Anticodon-binding domain of a subclass of class I aminoacyl-tRNA synthetases"/>
    <property type="match status" value="1"/>
</dbReference>
<dbReference type="SUPFAM" id="SSF52374">
    <property type="entry name" value="Nucleotidylyl transferase"/>
    <property type="match status" value="1"/>
</dbReference>
<dbReference type="SUPFAM" id="SSF50677">
    <property type="entry name" value="ValRS/IleRS/LeuRS editing domain"/>
    <property type="match status" value="1"/>
</dbReference>
<dbReference type="PROSITE" id="PS00178">
    <property type="entry name" value="AA_TRNA_LIGASE_I"/>
    <property type="match status" value="1"/>
</dbReference>
<keyword id="KW-0030">Aminoacyl-tRNA synthetase</keyword>
<keyword id="KW-0067">ATP-binding</keyword>
<keyword id="KW-0963">Cytoplasm</keyword>
<keyword id="KW-0436">Ligase</keyword>
<keyword id="KW-0547">Nucleotide-binding</keyword>
<keyword id="KW-0648">Protein biosynthesis</keyword>
<comment type="catalytic activity">
    <reaction evidence="1">
        <text>tRNA(Leu) + L-leucine + ATP = L-leucyl-tRNA(Leu) + AMP + diphosphate</text>
        <dbReference type="Rhea" id="RHEA:11688"/>
        <dbReference type="Rhea" id="RHEA-COMP:9613"/>
        <dbReference type="Rhea" id="RHEA-COMP:9622"/>
        <dbReference type="ChEBI" id="CHEBI:30616"/>
        <dbReference type="ChEBI" id="CHEBI:33019"/>
        <dbReference type="ChEBI" id="CHEBI:57427"/>
        <dbReference type="ChEBI" id="CHEBI:78442"/>
        <dbReference type="ChEBI" id="CHEBI:78494"/>
        <dbReference type="ChEBI" id="CHEBI:456215"/>
        <dbReference type="EC" id="6.1.1.4"/>
    </reaction>
</comment>
<comment type="subcellular location">
    <subcellularLocation>
        <location evidence="1">Cytoplasm</location>
    </subcellularLocation>
</comment>
<comment type="similarity">
    <text evidence="1">Belongs to the class-I aminoacyl-tRNA synthetase family.</text>
</comment>
<evidence type="ECO:0000255" key="1">
    <source>
        <dbReference type="HAMAP-Rule" id="MF_00049"/>
    </source>
</evidence>
<gene>
    <name evidence="1" type="primary">leuS</name>
    <name type="ordered locus">jhp_1452</name>
</gene>